<accession>F4IXT6</accession>
<accession>Q9LRS9</accession>
<evidence type="ECO:0000250" key="1"/>
<evidence type="ECO:0000255" key="2"/>
<evidence type="ECO:0000305" key="3"/>
<protein>
    <recommendedName>
        <fullName>WAT1-related protein At3g28060</fullName>
    </recommendedName>
</protein>
<name>WTR19_ARATH</name>
<sequence>MAGRFCQRDGGIMTAMVAVEILTECSQSSWNNSLHCGVFRHLPRNRPIIIGSSGEVFWVEYTLIAVAYIVQTHIMREYPSEFALALSHNVCVSISCAFVSLFVEENNPSAWIMRSKIMLICIVATGVVNSTSYVVESWTVRYKGAVFLAMFRPLSIVTAVVLGAIFLGDSLYLGSVIGGTLISIGFSVHNSLFHIANGFSALAKSSVLRHIGMLV</sequence>
<comment type="subcellular location">
    <subcellularLocation>
        <location evidence="1">Membrane</location>
        <topology evidence="3">Multi-pass membrane protein</topology>
    </subcellularLocation>
</comment>
<comment type="similarity">
    <text evidence="3">Belongs to the drug/metabolite transporter (DMT) superfamily. Plant drug/metabolite exporter (P-DME) (TC 2.A.7.4) family.</text>
</comment>
<comment type="sequence caution" evidence="3">
    <conflict type="erroneous gene model prediction">
        <sequence resource="EMBL-CDS" id="BAB01128"/>
    </conflict>
</comment>
<feature type="chain" id="PRO_0000421327" description="WAT1-related protein At3g28060">
    <location>
        <begin position="1"/>
        <end position="215"/>
    </location>
</feature>
<feature type="transmembrane region" description="Helical" evidence="2">
    <location>
        <begin position="48"/>
        <end position="68"/>
    </location>
</feature>
<feature type="transmembrane region" description="Helical" evidence="2">
    <location>
        <begin position="82"/>
        <end position="102"/>
    </location>
</feature>
<feature type="transmembrane region" description="Helical" evidence="2">
    <location>
        <begin position="117"/>
        <end position="137"/>
    </location>
</feature>
<feature type="transmembrane region" description="Helical" evidence="2">
    <location>
        <begin position="146"/>
        <end position="166"/>
    </location>
</feature>
<feature type="transmembrane region" description="Helical" evidence="2">
    <location>
        <begin position="176"/>
        <end position="196"/>
    </location>
</feature>
<feature type="domain" description="EamA">
    <location>
        <begin position="65"/>
        <end position="186"/>
    </location>
</feature>
<gene>
    <name type="ordered locus">At3g28060</name>
    <name type="ORF">MMG15.10</name>
</gene>
<organism>
    <name type="scientific">Arabidopsis thaliana</name>
    <name type="common">Mouse-ear cress</name>
    <dbReference type="NCBI Taxonomy" id="3702"/>
    <lineage>
        <taxon>Eukaryota</taxon>
        <taxon>Viridiplantae</taxon>
        <taxon>Streptophyta</taxon>
        <taxon>Embryophyta</taxon>
        <taxon>Tracheophyta</taxon>
        <taxon>Spermatophyta</taxon>
        <taxon>Magnoliopsida</taxon>
        <taxon>eudicotyledons</taxon>
        <taxon>Gunneridae</taxon>
        <taxon>Pentapetalae</taxon>
        <taxon>rosids</taxon>
        <taxon>malvids</taxon>
        <taxon>Brassicales</taxon>
        <taxon>Brassicaceae</taxon>
        <taxon>Camelineae</taxon>
        <taxon>Arabidopsis</taxon>
    </lineage>
</organism>
<reference key="1">
    <citation type="journal article" date="2000" name="DNA Res.">
        <title>Structural analysis of Arabidopsis thaliana chromosome 3. II. Sequence features of the 4,251,695 bp regions covered by 90 P1, TAC and BAC clones.</title>
        <authorList>
            <person name="Kaneko T."/>
            <person name="Katoh T."/>
            <person name="Sato S."/>
            <person name="Nakamura Y."/>
            <person name="Asamizu E."/>
            <person name="Tabata S."/>
        </authorList>
    </citation>
    <scope>NUCLEOTIDE SEQUENCE [LARGE SCALE GENOMIC DNA]</scope>
    <source>
        <strain>cv. Columbia</strain>
    </source>
</reference>
<reference key="2">
    <citation type="journal article" date="2017" name="Plant J.">
        <title>Araport11: a complete reannotation of the Arabidopsis thaliana reference genome.</title>
        <authorList>
            <person name="Cheng C.Y."/>
            <person name="Krishnakumar V."/>
            <person name="Chan A.P."/>
            <person name="Thibaud-Nissen F."/>
            <person name="Schobel S."/>
            <person name="Town C.D."/>
        </authorList>
    </citation>
    <scope>GENOME REANNOTATION</scope>
    <source>
        <strain>cv. Columbia</strain>
    </source>
</reference>
<proteinExistence type="inferred from homology"/>
<dbReference type="EMBL" id="AB028616">
    <property type="protein sequence ID" value="BAB01128.1"/>
    <property type="status" value="ALT_SEQ"/>
    <property type="molecule type" value="Genomic_DNA"/>
</dbReference>
<dbReference type="EMBL" id="CP002686">
    <property type="status" value="NOT_ANNOTATED_CDS"/>
    <property type="molecule type" value="Genomic_DNA"/>
</dbReference>
<dbReference type="PaxDb" id="3702-AT3G28060.1"/>
<dbReference type="Araport" id="AT3G28060"/>
<dbReference type="TAIR" id="AT3G28060">
    <property type="gene designation" value="UMAMIT43-PSI"/>
</dbReference>
<dbReference type="eggNOG" id="ENOG502QRQK">
    <property type="taxonomic scope" value="Eukaryota"/>
</dbReference>
<dbReference type="HOGENOM" id="CLU_1284873_0_0_1"/>
<dbReference type="InParanoid" id="F4IXT6"/>
<dbReference type="PRO" id="PR:F4IXT6"/>
<dbReference type="Proteomes" id="UP000006548">
    <property type="component" value="Chromosome 3"/>
</dbReference>
<dbReference type="ExpressionAtlas" id="F4IXT6">
    <property type="expression patterns" value="baseline and differential"/>
</dbReference>
<dbReference type="GO" id="GO:0016020">
    <property type="term" value="C:membrane"/>
    <property type="evidence" value="ECO:0007669"/>
    <property type="project" value="UniProtKB-SubCell"/>
</dbReference>
<dbReference type="GO" id="GO:0022857">
    <property type="term" value="F:transmembrane transporter activity"/>
    <property type="evidence" value="ECO:0007669"/>
    <property type="project" value="InterPro"/>
</dbReference>
<dbReference type="InterPro" id="IPR000620">
    <property type="entry name" value="EamA_dom"/>
</dbReference>
<dbReference type="InterPro" id="IPR030184">
    <property type="entry name" value="WAT1-related"/>
</dbReference>
<dbReference type="PANTHER" id="PTHR31218">
    <property type="entry name" value="WAT1-RELATED PROTEIN"/>
    <property type="match status" value="1"/>
</dbReference>
<dbReference type="Pfam" id="PF00892">
    <property type="entry name" value="EamA"/>
    <property type="match status" value="1"/>
</dbReference>
<dbReference type="SUPFAM" id="SSF103481">
    <property type="entry name" value="Multidrug resistance efflux transporter EmrE"/>
    <property type="match status" value="1"/>
</dbReference>
<keyword id="KW-0472">Membrane</keyword>
<keyword id="KW-1185">Reference proteome</keyword>
<keyword id="KW-0812">Transmembrane</keyword>
<keyword id="KW-1133">Transmembrane helix</keyword>